<name>YVNA_BACSU</name>
<dbReference type="EMBL" id="AF017113">
    <property type="protein sequence ID" value="AAC67281.1"/>
    <property type="molecule type" value="Genomic_DNA"/>
</dbReference>
<dbReference type="EMBL" id="AL009126">
    <property type="protein sequence ID" value="CAB15510.1"/>
    <property type="molecule type" value="Genomic_DNA"/>
</dbReference>
<dbReference type="PIR" id="B70044">
    <property type="entry name" value="B70044"/>
</dbReference>
<dbReference type="RefSeq" id="NP_391385.1">
    <property type="nucleotide sequence ID" value="NC_000964.3"/>
</dbReference>
<dbReference type="RefSeq" id="WP_003228083.1">
    <property type="nucleotide sequence ID" value="NZ_OZ025638.1"/>
</dbReference>
<dbReference type="SMR" id="O34692"/>
<dbReference type="FunCoup" id="O34692">
    <property type="interactions" value="18"/>
</dbReference>
<dbReference type="STRING" id="224308.BSU35050"/>
<dbReference type="PaxDb" id="224308-BSU35050"/>
<dbReference type="DNASU" id="936639"/>
<dbReference type="EnsemblBacteria" id="CAB15510">
    <property type="protein sequence ID" value="CAB15510"/>
    <property type="gene ID" value="BSU_35050"/>
</dbReference>
<dbReference type="GeneID" id="936639"/>
<dbReference type="KEGG" id="bsu:BSU35050"/>
<dbReference type="PATRIC" id="fig|224308.179.peg.3794"/>
<dbReference type="eggNOG" id="COG1846">
    <property type="taxonomic scope" value="Bacteria"/>
</dbReference>
<dbReference type="InParanoid" id="O34692"/>
<dbReference type="OrthoDB" id="5358347at2"/>
<dbReference type="PhylomeDB" id="O34692"/>
<dbReference type="BioCyc" id="BSUB:BSU35050-MONOMER"/>
<dbReference type="Proteomes" id="UP000001570">
    <property type="component" value="Chromosome"/>
</dbReference>
<dbReference type="GO" id="GO:0005737">
    <property type="term" value="C:cytoplasm"/>
    <property type="evidence" value="ECO:0007669"/>
    <property type="project" value="UniProtKB-SubCell"/>
</dbReference>
<dbReference type="GO" id="GO:0003677">
    <property type="term" value="F:DNA binding"/>
    <property type="evidence" value="ECO:0007669"/>
    <property type="project" value="UniProtKB-KW"/>
</dbReference>
<dbReference type="GO" id="GO:0003700">
    <property type="term" value="F:DNA-binding transcription factor activity"/>
    <property type="evidence" value="ECO:0007669"/>
    <property type="project" value="InterPro"/>
</dbReference>
<dbReference type="Gene3D" id="6.10.140.1680">
    <property type="match status" value="1"/>
</dbReference>
<dbReference type="Gene3D" id="1.10.10.10">
    <property type="entry name" value="Winged helix-like DNA-binding domain superfamily/Winged helix DNA-binding domain"/>
    <property type="match status" value="1"/>
</dbReference>
<dbReference type="InterPro" id="IPR000835">
    <property type="entry name" value="HTH_MarR-typ"/>
</dbReference>
<dbReference type="InterPro" id="IPR052067">
    <property type="entry name" value="Metal_resp_HTH_trans_reg"/>
</dbReference>
<dbReference type="InterPro" id="IPR036388">
    <property type="entry name" value="WH-like_DNA-bd_sf"/>
</dbReference>
<dbReference type="InterPro" id="IPR036390">
    <property type="entry name" value="WH_DNA-bd_sf"/>
</dbReference>
<dbReference type="PANTHER" id="PTHR35790">
    <property type="entry name" value="HTH-TYPE TRANSCRIPTIONAL REGULATOR PCHR"/>
    <property type="match status" value="1"/>
</dbReference>
<dbReference type="PANTHER" id="PTHR35790:SF4">
    <property type="entry name" value="HTH-TYPE TRANSCRIPTIONAL REGULATOR PCHR"/>
    <property type="match status" value="1"/>
</dbReference>
<dbReference type="Pfam" id="PF01047">
    <property type="entry name" value="MarR"/>
    <property type="match status" value="1"/>
</dbReference>
<dbReference type="SMART" id="SM00347">
    <property type="entry name" value="HTH_MARR"/>
    <property type="match status" value="1"/>
</dbReference>
<dbReference type="SUPFAM" id="SSF46785">
    <property type="entry name" value="Winged helix' DNA-binding domain"/>
    <property type="match status" value="1"/>
</dbReference>
<dbReference type="PROSITE" id="PS50995">
    <property type="entry name" value="HTH_MARR_2"/>
    <property type="match status" value="1"/>
</dbReference>
<comment type="subcellular location">
    <subcellularLocation>
        <location evidence="2">Cytoplasm</location>
    </subcellularLocation>
</comment>
<organism>
    <name type="scientific">Bacillus subtilis (strain 168)</name>
    <dbReference type="NCBI Taxonomy" id="224308"/>
    <lineage>
        <taxon>Bacteria</taxon>
        <taxon>Bacillati</taxon>
        <taxon>Bacillota</taxon>
        <taxon>Bacilli</taxon>
        <taxon>Bacillales</taxon>
        <taxon>Bacillaceae</taxon>
        <taxon>Bacillus</taxon>
    </lineage>
</organism>
<evidence type="ECO:0000255" key="1">
    <source>
        <dbReference type="PROSITE-ProRule" id="PRU00345"/>
    </source>
</evidence>
<evidence type="ECO:0000305" key="2"/>
<accession>O34692</accession>
<accession>Q795E7</accession>
<reference key="1">
    <citation type="submission" date="1997-08" db="EMBL/GenBank/DDBJ databases">
        <title>Nucleotide sequence of the 300-304 chromosomal segment of Bacillus subtilis.</title>
        <authorList>
            <person name="Lazarevic V."/>
            <person name="Soldo B."/>
            <person name="Rivolta C."/>
            <person name="Reynolds S."/>
            <person name="Mauel C."/>
            <person name="Karamata D."/>
        </authorList>
    </citation>
    <scope>NUCLEOTIDE SEQUENCE [GENOMIC DNA]</scope>
</reference>
<reference key="2">
    <citation type="journal article" date="1997" name="Nature">
        <title>The complete genome sequence of the Gram-positive bacterium Bacillus subtilis.</title>
        <authorList>
            <person name="Kunst F."/>
            <person name="Ogasawara N."/>
            <person name="Moszer I."/>
            <person name="Albertini A.M."/>
            <person name="Alloni G."/>
            <person name="Azevedo V."/>
            <person name="Bertero M.G."/>
            <person name="Bessieres P."/>
            <person name="Bolotin A."/>
            <person name="Borchert S."/>
            <person name="Borriss R."/>
            <person name="Boursier L."/>
            <person name="Brans A."/>
            <person name="Braun M."/>
            <person name="Brignell S.C."/>
            <person name="Bron S."/>
            <person name="Brouillet S."/>
            <person name="Bruschi C.V."/>
            <person name="Caldwell B."/>
            <person name="Capuano V."/>
            <person name="Carter N.M."/>
            <person name="Choi S.-K."/>
            <person name="Codani J.-J."/>
            <person name="Connerton I.F."/>
            <person name="Cummings N.J."/>
            <person name="Daniel R.A."/>
            <person name="Denizot F."/>
            <person name="Devine K.M."/>
            <person name="Duesterhoeft A."/>
            <person name="Ehrlich S.D."/>
            <person name="Emmerson P.T."/>
            <person name="Entian K.-D."/>
            <person name="Errington J."/>
            <person name="Fabret C."/>
            <person name="Ferrari E."/>
            <person name="Foulger D."/>
            <person name="Fritz C."/>
            <person name="Fujita M."/>
            <person name="Fujita Y."/>
            <person name="Fuma S."/>
            <person name="Galizzi A."/>
            <person name="Galleron N."/>
            <person name="Ghim S.-Y."/>
            <person name="Glaser P."/>
            <person name="Goffeau A."/>
            <person name="Golightly E.J."/>
            <person name="Grandi G."/>
            <person name="Guiseppi G."/>
            <person name="Guy B.J."/>
            <person name="Haga K."/>
            <person name="Haiech J."/>
            <person name="Harwood C.R."/>
            <person name="Henaut A."/>
            <person name="Hilbert H."/>
            <person name="Holsappel S."/>
            <person name="Hosono S."/>
            <person name="Hullo M.-F."/>
            <person name="Itaya M."/>
            <person name="Jones L.-M."/>
            <person name="Joris B."/>
            <person name="Karamata D."/>
            <person name="Kasahara Y."/>
            <person name="Klaerr-Blanchard M."/>
            <person name="Klein C."/>
            <person name="Kobayashi Y."/>
            <person name="Koetter P."/>
            <person name="Koningstein G."/>
            <person name="Krogh S."/>
            <person name="Kumano M."/>
            <person name="Kurita K."/>
            <person name="Lapidus A."/>
            <person name="Lardinois S."/>
            <person name="Lauber J."/>
            <person name="Lazarevic V."/>
            <person name="Lee S.-M."/>
            <person name="Levine A."/>
            <person name="Liu H."/>
            <person name="Masuda S."/>
            <person name="Mauel C."/>
            <person name="Medigue C."/>
            <person name="Medina N."/>
            <person name="Mellado R.P."/>
            <person name="Mizuno M."/>
            <person name="Moestl D."/>
            <person name="Nakai S."/>
            <person name="Noback M."/>
            <person name="Noone D."/>
            <person name="O'Reilly M."/>
            <person name="Ogawa K."/>
            <person name="Ogiwara A."/>
            <person name="Oudega B."/>
            <person name="Park S.-H."/>
            <person name="Parro V."/>
            <person name="Pohl T.M."/>
            <person name="Portetelle D."/>
            <person name="Porwollik S."/>
            <person name="Prescott A.M."/>
            <person name="Presecan E."/>
            <person name="Pujic P."/>
            <person name="Purnelle B."/>
            <person name="Rapoport G."/>
            <person name="Rey M."/>
            <person name="Reynolds S."/>
            <person name="Rieger M."/>
            <person name="Rivolta C."/>
            <person name="Rocha E."/>
            <person name="Roche B."/>
            <person name="Rose M."/>
            <person name="Sadaie Y."/>
            <person name="Sato T."/>
            <person name="Scanlan E."/>
            <person name="Schleich S."/>
            <person name="Schroeter R."/>
            <person name="Scoffone F."/>
            <person name="Sekiguchi J."/>
            <person name="Sekowska A."/>
            <person name="Seror S.J."/>
            <person name="Serror P."/>
            <person name="Shin B.-S."/>
            <person name="Soldo B."/>
            <person name="Sorokin A."/>
            <person name="Tacconi E."/>
            <person name="Takagi T."/>
            <person name="Takahashi H."/>
            <person name="Takemaru K."/>
            <person name="Takeuchi M."/>
            <person name="Tamakoshi A."/>
            <person name="Tanaka T."/>
            <person name="Terpstra P."/>
            <person name="Tognoni A."/>
            <person name="Tosato V."/>
            <person name="Uchiyama S."/>
            <person name="Vandenbol M."/>
            <person name="Vannier F."/>
            <person name="Vassarotti A."/>
            <person name="Viari A."/>
            <person name="Wambutt R."/>
            <person name="Wedler E."/>
            <person name="Wedler H."/>
            <person name="Weitzenegger T."/>
            <person name="Winters P."/>
            <person name="Wipat A."/>
            <person name="Yamamoto H."/>
            <person name="Yamane K."/>
            <person name="Yasumoto K."/>
            <person name="Yata K."/>
            <person name="Yoshida K."/>
            <person name="Yoshikawa H.-F."/>
            <person name="Zumstein E."/>
            <person name="Yoshikawa H."/>
            <person name="Danchin A."/>
        </authorList>
    </citation>
    <scope>NUCLEOTIDE SEQUENCE [LARGE SCALE GENOMIC DNA]</scope>
    <source>
        <strain>168</strain>
    </source>
</reference>
<protein>
    <recommendedName>
        <fullName>Uncharacterized HTH-type transcriptional regulator YvnA</fullName>
    </recommendedName>
</protein>
<gene>
    <name type="primary">yvnA</name>
    <name type="ordered locus">BSU35050</name>
</gene>
<proteinExistence type="predicted"/>
<feature type="chain" id="PRO_0000360681" description="Uncharacterized HTH-type transcriptional regulator YvnA">
    <location>
        <begin position="1"/>
        <end position="157"/>
    </location>
</feature>
<feature type="domain" description="HTH marR-type" evidence="1">
    <location>
        <begin position="6"/>
        <end position="157"/>
    </location>
</feature>
<feature type="DNA-binding region" description="H-T-H motif" evidence="1">
    <location>
        <begin position="66"/>
        <end position="89"/>
    </location>
</feature>
<sequence>MDNSIHDELFQAIQQFALKRDKRVWQKVQIPSIGISSQHHDHLKKDWTLTQLHIVSCIHTSQNVNNSFLASRLHISKAAVSKAVHALLKHNIITVTKKPGNKKEIFYTLTDSGRKLAALHEQLHEKAKEQYKQLFNEFSIDDLKTVTAFFNLWIKYM</sequence>
<keyword id="KW-0963">Cytoplasm</keyword>
<keyword id="KW-0238">DNA-binding</keyword>
<keyword id="KW-1185">Reference proteome</keyword>
<keyword id="KW-0804">Transcription</keyword>
<keyword id="KW-0805">Transcription regulation</keyword>